<sequence length="536" mass="58382">MAEHAPRRCCLGWDFSTQQVKVVAVDAELNVFYEESVHFDRDLPEFGTQGGVHVHKDGLTVTSPVLMWVQALDIILEKMKASGFDFSQVLALSGAGQQHGSIYWKAGAQQALTSLSPDLRLHQQLQDCFSISDCPVWMDSSTTAQCRQLEAAVGGAQALSCLTGSRAYERFTGNQIAKIYQQNPEAYSHTERISLVSSFAASLFLGSYSPIDYSDGSGMNLLQIQDKVWSQACLGACAPHLEEKLSPPVPSCSVVGAISSYYVQRYGFPPGCKVVAFTGDNPASLAGMRLEEGDIAVSLGTSDTLFLWLQEPMPALEGHIFCNPVDSQHYMALLCFKNGSLMREKIRNESVSRSWSDFSKALQSTEMGNGGNLGFYFDVMEITPEIIGRHRFNTENHKVAAFPGDVEVRALIEGQFMAKRIHAEGLGYRVMSKTKILATGGASHNREILQVLADVFDAPVYVIDTANSACVGSAYRAFHGLAGGTDVPFSEVVKLAPNPRLAATPSPGASQVYEALLPQYAKLEQRILSQTRGPPE</sequence>
<feature type="chain" id="PRO_0000230985" description="Xylulose kinase">
    <location>
        <begin position="1"/>
        <end position="536"/>
    </location>
</feature>
<feature type="binding site">
    <location>
        <position position="99"/>
    </location>
    <ligand>
        <name>substrate</name>
    </ligand>
</feature>
<feature type="binding site">
    <location>
        <position position="170"/>
    </location>
    <ligand>
        <name>substrate</name>
    </ligand>
</feature>
<feature type="binding site">
    <location>
        <position position="280"/>
    </location>
    <ligand>
        <name>substrate</name>
    </ligand>
</feature>
<feature type="binding site">
    <location>
        <position position="281"/>
    </location>
    <ligand>
        <name>substrate</name>
    </ligand>
</feature>
<feature type="binding site">
    <location>
        <position position="355"/>
    </location>
    <ligand>
        <name>ATP</name>
        <dbReference type="ChEBI" id="CHEBI:30616"/>
    </ligand>
</feature>
<feature type="binding site">
    <location>
        <begin position="441"/>
        <end position="442"/>
    </location>
    <ligand>
        <name>ATP</name>
        <dbReference type="ChEBI" id="CHEBI:30616"/>
    </ligand>
</feature>
<feature type="binding site">
    <location>
        <position position="445"/>
    </location>
    <ligand>
        <name>ATP</name>
        <dbReference type="ChEBI" id="CHEBI:30616"/>
    </ligand>
</feature>
<feature type="splice variant" id="VSP_055522" description="In isoform 2." evidence="5">
    <location>
        <begin position="1"/>
        <end position="137"/>
    </location>
</feature>
<feature type="sequence variant" id="VAR_055151" description="In dbSNP:rs17118." evidence="1 3 4">
    <original>D</original>
    <variation>E</variation>
    <location>
        <position position="85"/>
    </location>
</feature>
<feature type="sequence variant" id="VAR_055152" description="In dbSNP:rs2234610.">
    <original>D</original>
    <variation>N</variation>
    <location>
        <position position="133"/>
    </location>
</feature>
<feature type="sequence variant" id="VAR_055153" description="In dbSNP:rs151611.">
    <original>D</original>
    <variation>E</variation>
    <location>
        <position position="139"/>
    </location>
</feature>
<feature type="sequence variant" id="VAR_055154" description="In dbSNP:rs196380." evidence="3">
    <original>Y</original>
    <variation>N</variation>
    <location>
        <position position="262"/>
    </location>
</feature>
<feature type="sequence variant" id="VAR_055155" description="In dbSNP:rs2234622.">
    <original>N</original>
    <variation>D</variation>
    <location>
        <position position="348"/>
    </location>
</feature>
<feature type="strand" evidence="7">
    <location>
        <begin position="9"/>
        <end position="15"/>
    </location>
</feature>
<feature type="strand" evidence="7">
    <location>
        <begin position="17"/>
        <end position="26"/>
    </location>
</feature>
<feature type="strand" evidence="7">
    <location>
        <begin position="31"/>
        <end position="38"/>
    </location>
</feature>
<feature type="helix" evidence="7">
    <location>
        <begin position="39"/>
        <end position="42"/>
    </location>
</feature>
<feature type="helix" evidence="7">
    <location>
        <begin position="44"/>
        <end position="46"/>
    </location>
</feature>
<feature type="strand" evidence="7">
    <location>
        <begin position="52"/>
        <end position="54"/>
    </location>
</feature>
<feature type="strand" evidence="7">
    <location>
        <begin position="61"/>
        <end position="64"/>
    </location>
</feature>
<feature type="helix" evidence="7">
    <location>
        <begin position="65"/>
        <end position="81"/>
    </location>
</feature>
<feature type="helix" evidence="7">
    <location>
        <begin position="86"/>
        <end position="88"/>
    </location>
</feature>
<feature type="strand" evidence="7">
    <location>
        <begin position="89"/>
        <end position="96"/>
    </location>
</feature>
<feature type="strand" evidence="7">
    <location>
        <begin position="101"/>
        <end position="105"/>
    </location>
</feature>
<feature type="helix" evidence="7">
    <location>
        <begin position="108"/>
        <end position="113"/>
    </location>
</feature>
<feature type="helix" evidence="7">
    <location>
        <begin position="121"/>
        <end position="125"/>
    </location>
</feature>
<feature type="strand" evidence="7">
    <location>
        <begin position="132"/>
        <end position="135"/>
    </location>
</feature>
<feature type="helix" evidence="7">
    <location>
        <begin position="143"/>
        <end position="153"/>
    </location>
</feature>
<feature type="helix" evidence="7">
    <location>
        <begin position="156"/>
        <end position="163"/>
    </location>
</feature>
<feature type="helix" evidence="7">
    <location>
        <begin position="172"/>
        <end position="182"/>
    </location>
</feature>
<feature type="helix" evidence="7">
    <location>
        <begin position="184"/>
        <end position="188"/>
    </location>
</feature>
<feature type="strand" evidence="7">
    <location>
        <begin position="190"/>
        <end position="195"/>
    </location>
</feature>
<feature type="helix" evidence="7">
    <location>
        <begin position="196"/>
        <end position="205"/>
    </location>
</feature>
<feature type="helix" evidence="7">
    <location>
        <begin position="213"/>
        <end position="216"/>
    </location>
</feature>
<feature type="strand" evidence="8">
    <location>
        <begin position="218"/>
        <end position="220"/>
    </location>
</feature>
<feature type="turn" evidence="7">
    <location>
        <begin position="224"/>
        <end position="227"/>
    </location>
</feature>
<feature type="helix" evidence="7">
    <location>
        <begin position="231"/>
        <end position="237"/>
    </location>
</feature>
<feature type="helix" evidence="7">
    <location>
        <begin position="241"/>
        <end position="245"/>
    </location>
</feature>
<feature type="strand" evidence="7">
    <location>
        <begin position="254"/>
        <end position="257"/>
    </location>
</feature>
<feature type="helix" evidence="7">
    <location>
        <begin position="260"/>
        <end position="266"/>
    </location>
</feature>
<feature type="strand" evidence="7">
    <location>
        <begin position="273"/>
        <end position="275"/>
    </location>
</feature>
<feature type="helix" evidence="7">
    <location>
        <begin position="280"/>
        <end position="287"/>
    </location>
</feature>
<feature type="strand" evidence="7">
    <location>
        <begin position="295"/>
        <end position="311"/>
    </location>
</feature>
<feature type="strand" evidence="7">
    <location>
        <begin position="316"/>
        <end position="323"/>
    </location>
</feature>
<feature type="strand" evidence="7">
    <location>
        <begin position="326"/>
        <end position="339"/>
    </location>
</feature>
<feature type="helix" evidence="7">
    <location>
        <begin position="340"/>
        <end position="350"/>
    </location>
</feature>
<feature type="helix" evidence="7">
    <location>
        <begin position="355"/>
        <end position="363"/>
    </location>
</feature>
<feature type="helix" evidence="7">
    <location>
        <begin position="369"/>
        <end position="371"/>
    </location>
</feature>
<feature type="strand" evidence="7">
    <location>
        <begin position="373"/>
        <end position="379"/>
    </location>
</feature>
<feature type="strand" evidence="7">
    <location>
        <begin position="382"/>
        <end position="384"/>
    </location>
</feature>
<feature type="strand" evidence="7">
    <location>
        <begin position="388"/>
        <end position="392"/>
    </location>
</feature>
<feature type="strand" evidence="7">
    <location>
        <begin position="398"/>
        <end position="400"/>
    </location>
</feature>
<feature type="helix" evidence="7">
    <location>
        <begin position="404"/>
        <end position="425"/>
    </location>
</feature>
<feature type="strand" evidence="7">
    <location>
        <begin position="436"/>
        <end position="440"/>
    </location>
</feature>
<feature type="helix" evidence="7">
    <location>
        <begin position="441"/>
        <end position="444"/>
    </location>
</feature>
<feature type="helix" evidence="7">
    <location>
        <begin position="446"/>
        <end position="456"/>
    </location>
</feature>
<feature type="strand" evidence="7">
    <location>
        <begin position="460"/>
        <end position="462"/>
    </location>
</feature>
<feature type="helix" evidence="7">
    <location>
        <begin position="468"/>
        <end position="481"/>
    </location>
</feature>
<feature type="helix" evidence="7">
    <location>
        <begin position="484"/>
        <end position="486"/>
    </location>
</feature>
<feature type="helix" evidence="7">
    <location>
        <begin position="489"/>
        <end position="493"/>
    </location>
</feature>
<feature type="strand" evidence="7">
    <location>
        <begin position="500"/>
        <end position="503"/>
    </location>
</feature>
<feature type="helix" evidence="7">
    <location>
        <begin position="509"/>
        <end position="530"/>
    </location>
</feature>
<protein>
    <recommendedName>
        <fullName>Xylulose kinase</fullName>
        <shortName>Xylulokinase</shortName>
        <ecNumber>2.7.1.17</ecNumber>
    </recommendedName>
</protein>
<keyword id="KW-0002">3D-structure</keyword>
<keyword id="KW-0025">Alternative splicing</keyword>
<keyword id="KW-0067">ATP-binding</keyword>
<keyword id="KW-0119">Carbohydrate metabolism</keyword>
<keyword id="KW-0418">Kinase</keyword>
<keyword id="KW-0547">Nucleotide-binding</keyword>
<keyword id="KW-1267">Proteomics identification</keyword>
<keyword id="KW-1185">Reference proteome</keyword>
<keyword id="KW-0808">Transferase</keyword>
<keyword id="KW-0859">Xylose metabolism</keyword>
<reference key="1">
    <citation type="journal article" date="2004" name="Nat. Genet.">
        <title>Complete sequencing and characterization of 21,243 full-length human cDNAs.</title>
        <authorList>
            <person name="Ota T."/>
            <person name="Suzuki Y."/>
            <person name="Nishikawa T."/>
            <person name="Otsuki T."/>
            <person name="Sugiyama T."/>
            <person name="Irie R."/>
            <person name="Wakamatsu A."/>
            <person name="Hayashi K."/>
            <person name="Sato H."/>
            <person name="Nagai K."/>
            <person name="Kimura K."/>
            <person name="Makita H."/>
            <person name="Sekine M."/>
            <person name="Obayashi M."/>
            <person name="Nishi T."/>
            <person name="Shibahara T."/>
            <person name="Tanaka T."/>
            <person name="Ishii S."/>
            <person name="Yamamoto J."/>
            <person name="Saito K."/>
            <person name="Kawai Y."/>
            <person name="Isono Y."/>
            <person name="Nakamura Y."/>
            <person name="Nagahari K."/>
            <person name="Murakami K."/>
            <person name="Yasuda T."/>
            <person name="Iwayanagi T."/>
            <person name="Wagatsuma M."/>
            <person name="Shiratori A."/>
            <person name="Sudo H."/>
            <person name="Hosoiri T."/>
            <person name="Kaku Y."/>
            <person name="Kodaira H."/>
            <person name="Kondo H."/>
            <person name="Sugawara M."/>
            <person name="Takahashi M."/>
            <person name="Kanda K."/>
            <person name="Yokoi T."/>
            <person name="Furuya T."/>
            <person name="Kikkawa E."/>
            <person name="Omura Y."/>
            <person name="Abe K."/>
            <person name="Kamihara K."/>
            <person name="Katsuta N."/>
            <person name="Sato K."/>
            <person name="Tanikawa M."/>
            <person name="Yamazaki M."/>
            <person name="Ninomiya K."/>
            <person name="Ishibashi T."/>
            <person name="Yamashita H."/>
            <person name="Murakawa K."/>
            <person name="Fujimori K."/>
            <person name="Tanai H."/>
            <person name="Kimata M."/>
            <person name="Watanabe M."/>
            <person name="Hiraoka S."/>
            <person name="Chiba Y."/>
            <person name="Ishida S."/>
            <person name="Ono Y."/>
            <person name="Takiguchi S."/>
            <person name="Watanabe S."/>
            <person name="Yosida M."/>
            <person name="Hotuta T."/>
            <person name="Kusano J."/>
            <person name="Kanehori K."/>
            <person name="Takahashi-Fujii A."/>
            <person name="Hara H."/>
            <person name="Tanase T.-O."/>
            <person name="Nomura Y."/>
            <person name="Togiya S."/>
            <person name="Komai F."/>
            <person name="Hara R."/>
            <person name="Takeuchi K."/>
            <person name="Arita M."/>
            <person name="Imose N."/>
            <person name="Musashino K."/>
            <person name="Yuuki H."/>
            <person name="Oshima A."/>
            <person name="Sasaki N."/>
            <person name="Aotsuka S."/>
            <person name="Yoshikawa Y."/>
            <person name="Matsunawa H."/>
            <person name="Ichihara T."/>
            <person name="Shiohata N."/>
            <person name="Sano S."/>
            <person name="Moriya S."/>
            <person name="Momiyama H."/>
            <person name="Satoh N."/>
            <person name="Takami S."/>
            <person name="Terashima Y."/>
            <person name="Suzuki O."/>
            <person name="Nakagawa S."/>
            <person name="Senoh A."/>
            <person name="Mizoguchi H."/>
            <person name="Goto Y."/>
            <person name="Shimizu F."/>
            <person name="Wakebe H."/>
            <person name="Hishigaki H."/>
            <person name="Watanabe T."/>
            <person name="Sugiyama A."/>
            <person name="Takemoto M."/>
            <person name="Kawakami B."/>
            <person name="Yamazaki M."/>
            <person name="Watanabe K."/>
            <person name="Kumagai A."/>
            <person name="Itakura S."/>
            <person name="Fukuzumi Y."/>
            <person name="Fujimori Y."/>
            <person name="Komiyama M."/>
            <person name="Tashiro H."/>
            <person name="Tanigami A."/>
            <person name="Fujiwara T."/>
            <person name="Ono T."/>
            <person name="Yamada K."/>
            <person name="Fujii Y."/>
            <person name="Ozaki K."/>
            <person name="Hirao M."/>
            <person name="Ohmori Y."/>
            <person name="Kawabata A."/>
            <person name="Hikiji T."/>
            <person name="Kobatake N."/>
            <person name="Inagaki H."/>
            <person name="Ikema Y."/>
            <person name="Okamoto S."/>
            <person name="Okitani R."/>
            <person name="Kawakami T."/>
            <person name="Noguchi S."/>
            <person name="Itoh T."/>
            <person name="Shigeta K."/>
            <person name="Senba T."/>
            <person name="Matsumura K."/>
            <person name="Nakajima Y."/>
            <person name="Mizuno T."/>
            <person name="Morinaga M."/>
            <person name="Sasaki M."/>
            <person name="Togashi T."/>
            <person name="Oyama M."/>
            <person name="Hata H."/>
            <person name="Watanabe M."/>
            <person name="Komatsu T."/>
            <person name="Mizushima-Sugano J."/>
            <person name="Satoh T."/>
            <person name="Shirai Y."/>
            <person name="Takahashi Y."/>
            <person name="Nakagawa K."/>
            <person name="Okumura K."/>
            <person name="Nagase T."/>
            <person name="Nomura N."/>
            <person name="Kikuchi H."/>
            <person name="Masuho Y."/>
            <person name="Yamashita R."/>
            <person name="Nakai K."/>
            <person name="Yada T."/>
            <person name="Nakamura Y."/>
            <person name="Ohara O."/>
            <person name="Isogai T."/>
            <person name="Sugano S."/>
        </authorList>
    </citation>
    <scope>NUCLEOTIDE SEQUENCE [LARGE SCALE MRNA] (ISOFORMS 1 AND 2)</scope>
    <scope>VARIANT GLU-85</scope>
    <source>
        <tissue>Kidney</tissue>
        <tissue>Mammary gland</tissue>
    </source>
</reference>
<reference key="2">
    <citation type="journal article" date="2006" name="Nature">
        <title>The DNA sequence, annotation and analysis of human chromosome 3.</title>
        <authorList>
            <person name="Muzny D.M."/>
            <person name="Scherer S.E."/>
            <person name="Kaul R."/>
            <person name="Wang J."/>
            <person name="Yu J."/>
            <person name="Sudbrak R."/>
            <person name="Buhay C.J."/>
            <person name="Chen R."/>
            <person name="Cree A."/>
            <person name="Ding Y."/>
            <person name="Dugan-Rocha S."/>
            <person name="Gill R."/>
            <person name="Gunaratne P."/>
            <person name="Harris R.A."/>
            <person name="Hawes A.C."/>
            <person name="Hernandez J."/>
            <person name="Hodgson A.V."/>
            <person name="Hume J."/>
            <person name="Jackson A."/>
            <person name="Khan Z.M."/>
            <person name="Kovar-Smith C."/>
            <person name="Lewis L.R."/>
            <person name="Lozado R.J."/>
            <person name="Metzker M.L."/>
            <person name="Milosavljevic A."/>
            <person name="Miner G.R."/>
            <person name="Morgan M.B."/>
            <person name="Nazareth L.V."/>
            <person name="Scott G."/>
            <person name="Sodergren E."/>
            <person name="Song X.-Z."/>
            <person name="Steffen D."/>
            <person name="Wei S."/>
            <person name="Wheeler D.A."/>
            <person name="Wright M.W."/>
            <person name="Worley K.C."/>
            <person name="Yuan Y."/>
            <person name="Zhang Z."/>
            <person name="Adams C.Q."/>
            <person name="Ansari-Lari M.A."/>
            <person name="Ayele M."/>
            <person name="Brown M.J."/>
            <person name="Chen G."/>
            <person name="Chen Z."/>
            <person name="Clendenning J."/>
            <person name="Clerc-Blankenburg K.P."/>
            <person name="Chen R."/>
            <person name="Chen Z."/>
            <person name="Davis C."/>
            <person name="Delgado O."/>
            <person name="Dinh H.H."/>
            <person name="Dong W."/>
            <person name="Draper H."/>
            <person name="Ernst S."/>
            <person name="Fu G."/>
            <person name="Gonzalez-Garay M.L."/>
            <person name="Garcia D.K."/>
            <person name="Gillett W."/>
            <person name="Gu J."/>
            <person name="Hao B."/>
            <person name="Haugen E."/>
            <person name="Havlak P."/>
            <person name="He X."/>
            <person name="Hennig S."/>
            <person name="Hu S."/>
            <person name="Huang W."/>
            <person name="Jackson L.R."/>
            <person name="Jacob L.S."/>
            <person name="Kelly S.H."/>
            <person name="Kube M."/>
            <person name="Levy R."/>
            <person name="Li Z."/>
            <person name="Liu B."/>
            <person name="Liu J."/>
            <person name="Liu W."/>
            <person name="Lu J."/>
            <person name="Maheshwari M."/>
            <person name="Nguyen B.-V."/>
            <person name="Okwuonu G.O."/>
            <person name="Palmeiri A."/>
            <person name="Pasternak S."/>
            <person name="Perez L.M."/>
            <person name="Phelps K.A."/>
            <person name="Plopper F.J."/>
            <person name="Qiang B."/>
            <person name="Raymond C."/>
            <person name="Rodriguez R."/>
            <person name="Saenphimmachak C."/>
            <person name="Santibanez J."/>
            <person name="Shen H."/>
            <person name="Shen Y."/>
            <person name="Subramanian S."/>
            <person name="Tabor P.E."/>
            <person name="Verduzco D."/>
            <person name="Waldron L."/>
            <person name="Wang J."/>
            <person name="Wang J."/>
            <person name="Wang Q."/>
            <person name="Williams G.A."/>
            <person name="Wong G.K.-S."/>
            <person name="Yao Z."/>
            <person name="Zhang J."/>
            <person name="Zhang X."/>
            <person name="Zhao G."/>
            <person name="Zhou J."/>
            <person name="Zhou Y."/>
            <person name="Nelson D."/>
            <person name="Lehrach H."/>
            <person name="Reinhardt R."/>
            <person name="Naylor S.L."/>
            <person name="Yang H."/>
            <person name="Olson M."/>
            <person name="Weinstock G."/>
            <person name="Gibbs R.A."/>
        </authorList>
    </citation>
    <scope>NUCLEOTIDE SEQUENCE [LARGE SCALE GENOMIC DNA]</scope>
</reference>
<reference key="3">
    <citation type="submission" date="2005-07" db="EMBL/GenBank/DDBJ databases">
        <authorList>
            <person name="Mural R.J."/>
            <person name="Istrail S."/>
            <person name="Sutton G.G."/>
            <person name="Florea L."/>
            <person name="Halpern A.L."/>
            <person name="Mobarry C.M."/>
            <person name="Lippert R."/>
            <person name="Walenz B."/>
            <person name="Shatkay H."/>
            <person name="Dew I."/>
            <person name="Miller J.R."/>
            <person name="Flanigan M.J."/>
            <person name="Edwards N.J."/>
            <person name="Bolanos R."/>
            <person name="Fasulo D."/>
            <person name="Halldorsson B.V."/>
            <person name="Hannenhalli S."/>
            <person name="Turner R."/>
            <person name="Yooseph S."/>
            <person name="Lu F."/>
            <person name="Nusskern D.R."/>
            <person name="Shue B.C."/>
            <person name="Zheng X.H."/>
            <person name="Zhong F."/>
            <person name="Delcher A.L."/>
            <person name="Huson D.H."/>
            <person name="Kravitz S.A."/>
            <person name="Mouchard L."/>
            <person name="Reinert K."/>
            <person name="Remington K.A."/>
            <person name="Clark A.G."/>
            <person name="Waterman M.S."/>
            <person name="Eichler E.E."/>
            <person name="Adams M.D."/>
            <person name="Hunkapiller M.W."/>
            <person name="Myers E.W."/>
            <person name="Venter J.C."/>
        </authorList>
    </citation>
    <scope>NUCLEOTIDE SEQUENCE [LARGE SCALE GENOMIC DNA]</scope>
    <scope>VARIANT GLU-85</scope>
</reference>
<reference key="4">
    <citation type="journal article" date="2004" name="Genome Res.">
        <title>The status, quality, and expansion of the NIH full-length cDNA project: the Mammalian Gene Collection (MGC).</title>
        <authorList>
            <consortium name="The MGC Project Team"/>
        </authorList>
    </citation>
    <scope>NUCLEOTIDE SEQUENCE [LARGE SCALE MRNA] (ISOFORM 1)</scope>
    <source>
        <tissue>Lung</tissue>
        <tissue>Testis</tissue>
    </source>
</reference>
<reference key="5">
    <citation type="journal article" date="1998" name="Cytogenet. Cell Genet.">
        <title>Genomic structure of a novel human gene (XYLB) on chromosome 3p22--&gt;p21.3 encoding a xylulokinase-like protein.</title>
        <authorList>
            <person name="Tamari M."/>
            <person name="Daigo Y."/>
            <person name="Ishikawa S."/>
            <person name="Nakamura Y."/>
        </authorList>
    </citation>
    <scope>NUCLEOTIDE SEQUENCE [MRNA] OF 1-512 (ISOFORM 1)</scope>
    <scope>VARIANTS GLU-85 AND ASN-262</scope>
    <source>
        <tissue>Liver</tissue>
    </source>
</reference>
<reference key="6">
    <citation type="journal article" date="2011" name="BMC Syst. Biol.">
        <title>Initial characterization of the human central proteome.</title>
        <authorList>
            <person name="Burkard T.R."/>
            <person name="Planyavsky M."/>
            <person name="Kaupe I."/>
            <person name="Breitwieser F.P."/>
            <person name="Buerckstuemmer T."/>
            <person name="Bennett K.L."/>
            <person name="Superti-Furga G."/>
            <person name="Colinge J."/>
        </authorList>
    </citation>
    <scope>IDENTIFICATION BY MASS SPECTROMETRY [LARGE SCALE ANALYSIS]</scope>
</reference>
<reference key="7">
    <citation type="journal article" date="2014" name="J. Proteomics">
        <title>An enzyme assisted RP-RPLC approach for in-depth analysis of human liver phosphoproteome.</title>
        <authorList>
            <person name="Bian Y."/>
            <person name="Song C."/>
            <person name="Cheng K."/>
            <person name="Dong M."/>
            <person name="Wang F."/>
            <person name="Huang J."/>
            <person name="Sun D."/>
            <person name="Wang L."/>
            <person name="Ye M."/>
            <person name="Zou H."/>
        </authorList>
    </citation>
    <scope>IDENTIFICATION BY MASS SPECTROMETRY [LARGE SCALE ANALYSIS]</scope>
    <source>
        <tissue>Liver</tissue>
    </source>
</reference>
<reference key="8">
    <citation type="journal article" date="2013" name="J. Biol. Chem.">
        <title>Structure and function of human xylulokinase, an enzyme with important roles in carbohydrate metabolism.</title>
        <authorList>
            <person name="Bunker R.D."/>
            <person name="Bulloch E.M."/>
            <person name="Dickson J.M."/>
            <person name="Loomes K.M."/>
            <person name="Baker E.N."/>
        </authorList>
    </citation>
    <scope>X-RAY CRYSTALLOGRAPHY (1.68 ANGSTROMS) IN COMPLEX WITH D-XYLULOSE AND ADP</scope>
    <scope>CATALYTIC ACTIVITY</scope>
    <scope>FUNCTION</scope>
    <scope>SUBUNIT</scope>
    <scope>BIOPHYSICOCHEMICAL PROPERTIES</scope>
</reference>
<gene>
    <name type="primary">XYLB</name>
</gene>
<organism>
    <name type="scientific">Homo sapiens</name>
    <name type="common">Human</name>
    <dbReference type="NCBI Taxonomy" id="9606"/>
    <lineage>
        <taxon>Eukaryota</taxon>
        <taxon>Metazoa</taxon>
        <taxon>Chordata</taxon>
        <taxon>Craniata</taxon>
        <taxon>Vertebrata</taxon>
        <taxon>Euteleostomi</taxon>
        <taxon>Mammalia</taxon>
        <taxon>Eutheria</taxon>
        <taxon>Euarchontoglires</taxon>
        <taxon>Primates</taxon>
        <taxon>Haplorrhini</taxon>
        <taxon>Catarrhini</taxon>
        <taxon>Hominidae</taxon>
        <taxon>Homo</taxon>
    </lineage>
</organism>
<evidence type="ECO:0000269" key="1">
    <source>
    </source>
</evidence>
<evidence type="ECO:0000269" key="2">
    <source>
    </source>
</evidence>
<evidence type="ECO:0000269" key="3">
    <source>
    </source>
</evidence>
<evidence type="ECO:0000269" key="4">
    <source ref="3"/>
</evidence>
<evidence type="ECO:0000303" key="5">
    <source>
    </source>
</evidence>
<evidence type="ECO:0000305" key="6"/>
<evidence type="ECO:0007829" key="7">
    <source>
        <dbReference type="PDB" id="4BC3"/>
    </source>
</evidence>
<evidence type="ECO:0007829" key="8">
    <source>
        <dbReference type="PDB" id="4BC4"/>
    </source>
</evidence>
<proteinExistence type="evidence at protein level"/>
<comment type="function">
    <text evidence="2">Phosphorylates D-xylulose to produce D-xylulose 5-phosphate, a molecule that may play an important role in the regulation of glucose metabolism and lipogenesis.</text>
</comment>
<comment type="catalytic activity">
    <reaction evidence="2">
        <text>D-xylulose + ATP = D-xylulose 5-phosphate + ADP + H(+)</text>
        <dbReference type="Rhea" id="RHEA:10964"/>
        <dbReference type="ChEBI" id="CHEBI:15378"/>
        <dbReference type="ChEBI" id="CHEBI:17140"/>
        <dbReference type="ChEBI" id="CHEBI:30616"/>
        <dbReference type="ChEBI" id="CHEBI:57737"/>
        <dbReference type="ChEBI" id="CHEBI:456216"/>
        <dbReference type="EC" id="2.7.1.17"/>
    </reaction>
</comment>
<comment type="biophysicochemical properties">
    <kinetics>
        <KM evidence="2">24 uM for D-xylulose</KM>
    </kinetics>
</comment>
<comment type="subunit">
    <text evidence="2">Monomer.</text>
</comment>
<comment type="alternative products">
    <event type="alternative splicing"/>
    <isoform>
        <id>O75191-1</id>
        <name>1</name>
        <sequence type="displayed"/>
    </isoform>
    <isoform>
        <id>O75191-2</id>
        <name>2</name>
        <sequence type="described" ref="VSP_055522"/>
    </isoform>
</comment>
<comment type="similarity">
    <text evidence="6">Belongs to the FGGY kinase family.</text>
</comment>
<comment type="sequence caution" evidence="6">
    <conflict type="miscellaneous discrepancy">
        <sequence resource="EMBL-CDS" id="BAA31527"/>
    </conflict>
    <text>Probable cloning artifact.</text>
</comment>
<name>XYLB_HUMAN</name>
<accession>O75191</accession>
<accession>B2RAW4</accession>
<accession>B4DDT2</accession>
<accession>B9EH64</accession>
<dbReference type="EC" id="2.7.1.17"/>
<dbReference type="EMBL" id="AK293325">
    <property type="protein sequence ID" value="BAG56843.1"/>
    <property type="molecule type" value="mRNA"/>
</dbReference>
<dbReference type="EMBL" id="AK314386">
    <property type="protein sequence ID" value="BAG37011.1"/>
    <property type="molecule type" value="mRNA"/>
</dbReference>
<dbReference type="EMBL" id="AP006191">
    <property type="status" value="NOT_ANNOTATED_CDS"/>
    <property type="molecule type" value="Genomic_DNA"/>
</dbReference>
<dbReference type="EMBL" id="AP006193">
    <property type="status" value="NOT_ANNOTATED_CDS"/>
    <property type="molecule type" value="Genomic_DNA"/>
</dbReference>
<dbReference type="EMBL" id="CH471055">
    <property type="protein sequence ID" value="EAW64532.1"/>
    <property type="molecule type" value="Genomic_DNA"/>
</dbReference>
<dbReference type="EMBL" id="BC137076">
    <property type="protein sequence ID" value="AAI37077.1"/>
    <property type="molecule type" value="mRNA"/>
</dbReference>
<dbReference type="EMBL" id="BC137080">
    <property type="protein sequence ID" value="AAI37081.1"/>
    <property type="molecule type" value="mRNA"/>
</dbReference>
<dbReference type="EMBL" id="AB015046">
    <property type="protein sequence ID" value="BAA31527.1"/>
    <property type="status" value="ALT_SEQ"/>
    <property type="molecule type" value="mRNA"/>
</dbReference>
<dbReference type="CCDS" id="CCDS2678.1">
    <molecule id="O75191-1"/>
</dbReference>
<dbReference type="RefSeq" id="NP_001336108.1">
    <molecule id="O75191-2"/>
    <property type="nucleotide sequence ID" value="NM_001349179.2"/>
</dbReference>
<dbReference type="RefSeq" id="NP_005099.2">
    <molecule id="O75191-1"/>
    <property type="nucleotide sequence ID" value="NM_005108.3"/>
</dbReference>
<dbReference type="PDB" id="4BC2">
    <property type="method" value="X-ray"/>
    <property type="resolution" value="1.97 A"/>
    <property type="chains" value="A/B/C=1-536"/>
</dbReference>
<dbReference type="PDB" id="4BC3">
    <property type="method" value="X-ray"/>
    <property type="resolution" value="1.68 A"/>
    <property type="chains" value="A/B/C=1-536"/>
</dbReference>
<dbReference type="PDB" id="4BC4">
    <property type="method" value="X-ray"/>
    <property type="resolution" value="1.79 A"/>
    <property type="chains" value="A/B/C=1-536"/>
</dbReference>
<dbReference type="PDB" id="4BC5">
    <property type="method" value="X-ray"/>
    <property type="resolution" value="1.98 A"/>
    <property type="chains" value="A/B/C=1-536"/>
</dbReference>
<dbReference type="PDBsum" id="4BC2"/>
<dbReference type="PDBsum" id="4BC3"/>
<dbReference type="PDBsum" id="4BC4"/>
<dbReference type="PDBsum" id="4BC5"/>
<dbReference type="SMR" id="O75191"/>
<dbReference type="BioGRID" id="115268">
    <property type="interactions" value="14"/>
</dbReference>
<dbReference type="FunCoup" id="O75191">
    <property type="interactions" value="851"/>
</dbReference>
<dbReference type="IntAct" id="O75191">
    <property type="interactions" value="1"/>
</dbReference>
<dbReference type="STRING" id="9606.ENSP00000207870"/>
<dbReference type="GlyGen" id="O75191">
    <property type="glycosylation" value="2 sites, 1 O-linked glycan (1 site)"/>
</dbReference>
<dbReference type="iPTMnet" id="O75191"/>
<dbReference type="MetOSite" id="O75191"/>
<dbReference type="PhosphoSitePlus" id="O75191"/>
<dbReference type="BioMuta" id="XYLB"/>
<dbReference type="jPOST" id="O75191"/>
<dbReference type="MassIVE" id="O75191"/>
<dbReference type="PaxDb" id="9606-ENSP00000207870"/>
<dbReference type="PeptideAtlas" id="O75191"/>
<dbReference type="ProteomicsDB" id="3889"/>
<dbReference type="ProteomicsDB" id="49863">
    <molecule id="O75191-1"/>
</dbReference>
<dbReference type="Pumba" id="O75191"/>
<dbReference type="Antibodypedia" id="28592">
    <property type="antibodies" value="81 antibodies from 18 providers"/>
</dbReference>
<dbReference type="DNASU" id="9942"/>
<dbReference type="Ensembl" id="ENST00000207870.8">
    <molecule id="O75191-1"/>
    <property type="protein sequence ID" value="ENSP00000207870.3"/>
    <property type="gene ID" value="ENSG00000093217.11"/>
</dbReference>
<dbReference type="GeneID" id="9942"/>
<dbReference type="KEGG" id="hsa:9942"/>
<dbReference type="MANE-Select" id="ENST00000207870.8">
    <property type="protein sequence ID" value="ENSP00000207870.3"/>
    <property type="RefSeq nucleotide sequence ID" value="NM_005108.4"/>
    <property type="RefSeq protein sequence ID" value="NP_005099.2"/>
</dbReference>
<dbReference type="UCSC" id="uc003cic.3">
    <molecule id="O75191-1"/>
    <property type="organism name" value="human"/>
</dbReference>
<dbReference type="AGR" id="HGNC:12839"/>
<dbReference type="CTD" id="9942"/>
<dbReference type="DisGeNET" id="9942"/>
<dbReference type="GeneCards" id="XYLB"/>
<dbReference type="HGNC" id="HGNC:12839">
    <property type="gene designation" value="XYLB"/>
</dbReference>
<dbReference type="HPA" id="ENSG00000093217">
    <property type="expression patterns" value="Tissue enhanced (liver)"/>
</dbReference>
<dbReference type="MIM" id="604049">
    <property type="type" value="gene"/>
</dbReference>
<dbReference type="neXtProt" id="NX_O75191"/>
<dbReference type="OpenTargets" id="ENSG00000093217"/>
<dbReference type="PharmGKB" id="PA37430"/>
<dbReference type="VEuPathDB" id="HostDB:ENSG00000093217"/>
<dbReference type="eggNOG" id="KOG2531">
    <property type="taxonomic scope" value="Eukaryota"/>
</dbReference>
<dbReference type="GeneTree" id="ENSGT01000000214434"/>
<dbReference type="HOGENOM" id="CLU_016149_8_0_1"/>
<dbReference type="InParanoid" id="O75191"/>
<dbReference type="OMA" id="NSCALGG"/>
<dbReference type="OrthoDB" id="1728974at2759"/>
<dbReference type="PAN-GO" id="O75191">
    <property type="GO annotations" value="4 GO annotations based on evolutionary models"/>
</dbReference>
<dbReference type="PhylomeDB" id="O75191"/>
<dbReference type="TreeFam" id="TF313643"/>
<dbReference type="BRENDA" id="2.7.1.17">
    <property type="organism ID" value="2681"/>
</dbReference>
<dbReference type="PathwayCommons" id="O75191"/>
<dbReference type="Reactome" id="R-HSA-5661270">
    <property type="pathway name" value="Formation of xylulose-5-phosphate"/>
</dbReference>
<dbReference type="BioGRID-ORCS" id="9942">
    <property type="hits" value="13 hits in 1161 CRISPR screens"/>
</dbReference>
<dbReference type="ChiTaRS" id="XYLB">
    <property type="organism name" value="human"/>
</dbReference>
<dbReference type="EvolutionaryTrace" id="O75191"/>
<dbReference type="GenomeRNAi" id="9942"/>
<dbReference type="Pharos" id="O75191">
    <property type="development level" value="Tbio"/>
</dbReference>
<dbReference type="PRO" id="PR:O75191"/>
<dbReference type="Proteomes" id="UP000005640">
    <property type="component" value="Chromosome 3"/>
</dbReference>
<dbReference type="RNAct" id="O75191">
    <property type="molecule type" value="protein"/>
</dbReference>
<dbReference type="Bgee" id="ENSG00000093217">
    <property type="expression patterns" value="Expressed in right lobe of liver and 118 other cell types or tissues"/>
</dbReference>
<dbReference type="ExpressionAtlas" id="O75191">
    <property type="expression patterns" value="baseline and differential"/>
</dbReference>
<dbReference type="GO" id="GO:0005829">
    <property type="term" value="C:cytosol"/>
    <property type="evidence" value="ECO:0000318"/>
    <property type="project" value="GO_Central"/>
</dbReference>
<dbReference type="GO" id="GO:0005524">
    <property type="term" value="F:ATP binding"/>
    <property type="evidence" value="ECO:0007669"/>
    <property type="project" value="UniProtKB-KW"/>
</dbReference>
<dbReference type="GO" id="GO:0004856">
    <property type="term" value="F:D-xylulokinase activity"/>
    <property type="evidence" value="ECO:0000314"/>
    <property type="project" value="UniProtKB"/>
</dbReference>
<dbReference type="GO" id="GO:0005975">
    <property type="term" value="P:carbohydrate metabolic process"/>
    <property type="evidence" value="ECO:0000304"/>
    <property type="project" value="ProtInc"/>
</dbReference>
<dbReference type="GO" id="GO:0019640">
    <property type="term" value="P:D-glucuronate catabolic process to D-xylulose 5-phosphate"/>
    <property type="evidence" value="ECO:0000304"/>
    <property type="project" value="Reactome"/>
</dbReference>
<dbReference type="GO" id="GO:0042732">
    <property type="term" value="P:D-xylose metabolic process"/>
    <property type="evidence" value="ECO:0007669"/>
    <property type="project" value="UniProtKB-KW"/>
</dbReference>
<dbReference type="GO" id="GO:0006091">
    <property type="term" value="P:generation of precursor metabolites and energy"/>
    <property type="evidence" value="ECO:0000304"/>
    <property type="project" value="ProtInc"/>
</dbReference>
<dbReference type="GO" id="GO:0005998">
    <property type="term" value="P:xylulose catabolic process"/>
    <property type="evidence" value="ECO:0000304"/>
    <property type="project" value="BHF-UCL"/>
</dbReference>
<dbReference type="GO" id="GO:0005997">
    <property type="term" value="P:xylulose metabolic process"/>
    <property type="evidence" value="ECO:0000314"/>
    <property type="project" value="UniProtKB"/>
</dbReference>
<dbReference type="CDD" id="cd07776">
    <property type="entry name" value="ASKHA_NBD_FGGY_SpXK-like"/>
    <property type="match status" value="1"/>
</dbReference>
<dbReference type="FunFam" id="3.30.420.40:FF:000126">
    <property type="entry name" value="Xylulose kinase"/>
    <property type="match status" value="1"/>
</dbReference>
<dbReference type="Gene3D" id="3.30.420.40">
    <property type="match status" value="2"/>
</dbReference>
<dbReference type="InterPro" id="IPR043129">
    <property type="entry name" value="ATPase_NBD"/>
</dbReference>
<dbReference type="InterPro" id="IPR000577">
    <property type="entry name" value="Carb_kinase_FGGY"/>
</dbReference>
<dbReference type="InterPro" id="IPR042024">
    <property type="entry name" value="D-XK_euk"/>
</dbReference>
<dbReference type="InterPro" id="IPR018485">
    <property type="entry name" value="FGGY_C"/>
</dbReference>
<dbReference type="InterPro" id="IPR018484">
    <property type="entry name" value="FGGY_N"/>
</dbReference>
<dbReference type="PANTHER" id="PTHR10196">
    <property type="entry name" value="SUGAR KINASE"/>
    <property type="match status" value="1"/>
</dbReference>
<dbReference type="PANTHER" id="PTHR10196:SF57">
    <property type="entry name" value="XYLULOSE KINASE"/>
    <property type="match status" value="1"/>
</dbReference>
<dbReference type="Pfam" id="PF02782">
    <property type="entry name" value="FGGY_C"/>
    <property type="match status" value="1"/>
</dbReference>
<dbReference type="Pfam" id="PF00370">
    <property type="entry name" value="FGGY_N"/>
    <property type="match status" value="1"/>
</dbReference>
<dbReference type="PIRSF" id="PIRSF000538">
    <property type="entry name" value="GlpK"/>
    <property type="match status" value="1"/>
</dbReference>
<dbReference type="SUPFAM" id="SSF53067">
    <property type="entry name" value="Actin-like ATPase domain"/>
    <property type="match status" value="2"/>
</dbReference>